<name>LSPA_ECOSE</name>
<sequence>MSQSICSTGLRWLWLVVVVLIIDLGSKYLILQNFALGDTVPLFPSLNLHYARNYGAAFSFLADSGGWQRWFFAGIAIGISVILAVMMYRSKATQKLNNIAYALIIGGALGNLFDRLWHGFVVDMIDFYVGDWHFATFNLADTAICVGAALIVLEGFLPSKAKKQ</sequence>
<protein>
    <recommendedName>
        <fullName evidence="1">Lipoprotein signal peptidase</fullName>
        <ecNumber evidence="1">3.4.23.36</ecNumber>
    </recommendedName>
    <alternativeName>
        <fullName evidence="1">Prolipoprotein signal peptidase</fullName>
    </alternativeName>
    <alternativeName>
        <fullName evidence="1">Signal peptidase II</fullName>
        <shortName evidence="1">SPase II</shortName>
    </alternativeName>
</protein>
<comment type="function">
    <text evidence="1">This protein specifically catalyzes the removal of signal peptides from prolipoproteins.</text>
</comment>
<comment type="catalytic activity">
    <reaction evidence="1">
        <text>Release of signal peptides from bacterial membrane prolipoproteins. Hydrolyzes -Xaa-Yaa-Zaa-|-(S,diacylglyceryl)Cys-, in which Xaa is hydrophobic (preferably Leu), and Yaa (Ala or Ser) and Zaa (Gly or Ala) have small, neutral side chains.</text>
        <dbReference type="EC" id="3.4.23.36"/>
    </reaction>
</comment>
<comment type="pathway">
    <text evidence="1">Protein modification; lipoprotein biosynthesis (signal peptide cleavage).</text>
</comment>
<comment type="subcellular location">
    <subcellularLocation>
        <location evidence="1">Cell inner membrane</location>
        <topology evidence="1">Multi-pass membrane protein</topology>
    </subcellularLocation>
</comment>
<comment type="similarity">
    <text evidence="1">Belongs to the peptidase A8 family.</text>
</comment>
<evidence type="ECO:0000255" key="1">
    <source>
        <dbReference type="HAMAP-Rule" id="MF_00161"/>
    </source>
</evidence>
<keyword id="KW-0064">Aspartyl protease</keyword>
<keyword id="KW-0997">Cell inner membrane</keyword>
<keyword id="KW-1003">Cell membrane</keyword>
<keyword id="KW-0378">Hydrolase</keyword>
<keyword id="KW-0472">Membrane</keyword>
<keyword id="KW-0645">Protease</keyword>
<keyword id="KW-0812">Transmembrane</keyword>
<keyword id="KW-1133">Transmembrane helix</keyword>
<dbReference type="EC" id="3.4.23.36" evidence="1"/>
<dbReference type="EMBL" id="AP009240">
    <property type="protein sequence ID" value="BAG75549.1"/>
    <property type="molecule type" value="Genomic_DNA"/>
</dbReference>
<dbReference type="RefSeq" id="WP_000083369.1">
    <property type="nucleotide sequence ID" value="NC_011415.1"/>
</dbReference>
<dbReference type="SMR" id="B6HZ22"/>
<dbReference type="MEROPS" id="A08.001"/>
<dbReference type="GeneID" id="75169926"/>
<dbReference type="KEGG" id="ecy:ECSE_0025"/>
<dbReference type="HOGENOM" id="CLU_083252_4_0_6"/>
<dbReference type="UniPathway" id="UPA00665"/>
<dbReference type="Proteomes" id="UP000008199">
    <property type="component" value="Chromosome"/>
</dbReference>
<dbReference type="GO" id="GO:0005886">
    <property type="term" value="C:plasma membrane"/>
    <property type="evidence" value="ECO:0007669"/>
    <property type="project" value="UniProtKB-SubCell"/>
</dbReference>
<dbReference type="GO" id="GO:0004190">
    <property type="term" value="F:aspartic-type endopeptidase activity"/>
    <property type="evidence" value="ECO:0007669"/>
    <property type="project" value="UniProtKB-UniRule"/>
</dbReference>
<dbReference type="GO" id="GO:0006508">
    <property type="term" value="P:proteolysis"/>
    <property type="evidence" value="ECO:0007669"/>
    <property type="project" value="UniProtKB-KW"/>
</dbReference>
<dbReference type="HAMAP" id="MF_00161">
    <property type="entry name" value="LspA"/>
    <property type="match status" value="1"/>
</dbReference>
<dbReference type="InterPro" id="IPR001872">
    <property type="entry name" value="Peptidase_A8"/>
</dbReference>
<dbReference type="NCBIfam" id="TIGR00077">
    <property type="entry name" value="lspA"/>
    <property type="match status" value="1"/>
</dbReference>
<dbReference type="PANTHER" id="PTHR33695">
    <property type="entry name" value="LIPOPROTEIN SIGNAL PEPTIDASE"/>
    <property type="match status" value="1"/>
</dbReference>
<dbReference type="PANTHER" id="PTHR33695:SF1">
    <property type="entry name" value="LIPOPROTEIN SIGNAL PEPTIDASE"/>
    <property type="match status" value="1"/>
</dbReference>
<dbReference type="Pfam" id="PF01252">
    <property type="entry name" value="Peptidase_A8"/>
    <property type="match status" value="1"/>
</dbReference>
<dbReference type="PRINTS" id="PR00781">
    <property type="entry name" value="LIPOSIGPTASE"/>
</dbReference>
<dbReference type="PROSITE" id="PS00855">
    <property type="entry name" value="SPASE_II"/>
    <property type="match status" value="1"/>
</dbReference>
<proteinExistence type="inferred from homology"/>
<organism>
    <name type="scientific">Escherichia coli (strain SE11)</name>
    <dbReference type="NCBI Taxonomy" id="409438"/>
    <lineage>
        <taxon>Bacteria</taxon>
        <taxon>Pseudomonadati</taxon>
        <taxon>Pseudomonadota</taxon>
        <taxon>Gammaproteobacteria</taxon>
        <taxon>Enterobacterales</taxon>
        <taxon>Enterobacteriaceae</taxon>
        <taxon>Escherichia</taxon>
    </lineage>
</organism>
<accession>B6HZ22</accession>
<reference key="1">
    <citation type="journal article" date="2008" name="DNA Res.">
        <title>Complete genome sequence and comparative analysis of the wild-type commensal Escherichia coli strain SE11 isolated from a healthy adult.</title>
        <authorList>
            <person name="Oshima K."/>
            <person name="Toh H."/>
            <person name="Ogura Y."/>
            <person name="Sasamoto H."/>
            <person name="Morita H."/>
            <person name="Park S.-H."/>
            <person name="Ooka T."/>
            <person name="Iyoda S."/>
            <person name="Taylor T.D."/>
            <person name="Hayashi T."/>
            <person name="Itoh K."/>
            <person name="Hattori M."/>
        </authorList>
    </citation>
    <scope>NUCLEOTIDE SEQUENCE [LARGE SCALE GENOMIC DNA]</scope>
    <source>
        <strain>SE11</strain>
    </source>
</reference>
<feature type="chain" id="PRO_1000097254" description="Lipoprotein signal peptidase">
    <location>
        <begin position="1"/>
        <end position="164"/>
    </location>
</feature>
<feature type="transmembrane region" description="Helical" evidence="1">
    <location>
        <begin position="12"/>
        <end position="32"/>
    </location>
</feature>
<feature type="transmembrane region" description="Helical" evidence="1">
    <location>
        <begin position="70"/>
        <end position="90"/>
    </location>
</feature>
<feature type="transmembrane region" description="Helical" evidence="1">
    <location>
        <begin position="102"/>
        <end position="122"/>
    </location>
</feature>
<feature type="transmembrane region" description="Helical" evidence="1">
    <location>
        <begin position="137"/>
        <end position="157"/>
    </location>
</feature>
<feature type="active site" evidence="1">
    <location>
        <position position="123"/>
    </location>
</feature>
<feature type="active site" evidence="1">
    <location>
        <position position="141"/>
    </location>
</feature>
<gene>
    <name evidence="1" type="primary">lspA</name>
    <name type="ordered locus">ECSE_0025</name>
</gene>